<name>RECX_STAA8</name>
<proteinExistence type="inferred from homology"/>
<sequence>MPKITKIEVQKKNKERFNLFLDEQFEMGIDIDTLVKFNLKKGQQLEAADMAEIQKYDHYRIGLNKAIQYLSYKKRTEKEVIQYLQKEEISEQAISEVIEYCYREKLIDHQDYAESLKNTMIRTTDKGPKIYQQKLYQLGIEPNIIEIFTELYREQQELDDIIQIAEKISKTKKGPQNKVKEKVMQSLIQKGFEMETIHAVLNEMDFTQDEAVLDDLLQRDLEKIYNKNRKKYTQQKLISKTIEGLMRKGYKYDKIKAKLEESGIADGTEEIE</sequence>
<keyword id="KW-0963">Cytoplasm</keyword>
<keyword id="KW-1185">Reference proteome</keyword>
<dbReference type="EMBL" id="CP000253">
    <property type="protein sequence ID" value="ABD31067.1"/>
    <property type="molecule type" value="Genomic_DNA"/>
</dbReference>
<dbReference type="RefSeq" id="WP_001124419.1">
    <property type="nucleotide sequence ID" value="NZ_LS483365.1"/>
</dbReference>
<dbReference type="RefSeq" id="YP_500508.1">
    <property type="nucleotide sequence ID" value="NC_007795.1"/>
</dbReference>
<dbReference type="SMR" id="Q2G2G9"/>
<dbReference type="STRING" id="93061.SAOUHSC_02011"/>
<dbReference type="PaxDb" id="1280-SAXN108_1903"/>
<dbReference type="GeneID" id="3920465"/>
<dbReference type="KEGG" id="sao:SAOUHSC_02011"/>
<dbReference type="PATRIC" id="fig|93061.5.peg.1826"/>
<dbReference type="eggNOG" id="COG2137">
    <property type="taxonomic scope" value="Bacteria"/>
</dbReference>
<dbReference type="HOGENOM" id="CLU_066607_4_0_9"/>
<dbReference type="OrthoDB" id="5421057at2"/>
<dbReference type="PRO" id="PR:Q2G2G9"/>
<dbReference type="Proteomes" id="UP000008816">
    <property type="component" value="Chromosome"/>
</dbReference>
<dbReference type="GO" id="GO:0005737">
    <property type="term" value="C:cytoplasm"/>
    <property type="evidence" value="ECO:0007669"/>
    <property type="project" value="UniProtKB-SubCell"/>
</dbReference>
<dbReference type="GO" id="GO:0006282">
    <property type="term" value="P:regulation of DNA repair"/>
    <property type="evidence" value="ECO:0007669"/>
    <property type="project" value="UniProtKB-UniRule"/>
</dbReference>
<dbReference type="Gene3D" id="1.10.10.10">
    <property type="entry name" value="Winged helix-like DNA-binding domain superfamily/Winged helix DNA-binding domain"/>
    <property type="match status" value="4"/>
</dbReference>
<dbReference type="HAMAP" id="MF_01114">
    <property type="entry name" value="RecX"/>
    <property type="match status" value="1"/>
</dbReference>
<dbReference type="InterPro" id="IPR053926">
    <property type="entry name" value="RecX_HTH_1st"/>
</dbReference>
<dbReference type="InterPro" id="IPR053925">
    <property type="entry name" value="RecX_HTH_3rd"/>
</dbReference>
<dbReference type="InterPro" id="IPR003783">
    <property type="entry name" value="Regulatory_RecX"/>
</dbReference>
<dbReference type="InterPro" id="IPR036388">
    <property type="entry name" value="WH-like_DNA-bd_sf"/>
</dbReference>
<dbReference type="NCBIfam" id="NF010733">
    <property type="entry name" value="PRK14135.1"/>
    <property type="match status" value="1"/>
</dbReference>
<dbReference type="PANTHER" id="PTHR33602">
    <property type="entry name" value="REGULATORY PROTEIN RECX FAMILY PROTEIN"/>
    <property type="match status" value="1"/>
</dbReference>
<dbReference type="PANTHER" id="PTHR33602:SF1">
    <property type="entry name" value="REGULATORY PROTEIN RECX FAMILY PROTEIN"/>
    <property type="match status" value="1"/>
</dbReference>
<dbReference type="Pfam" id="PF21982">
    <property type="entry name" value="RecX_HTH1"/>
    <property type="match status" value="1"/>
</dbReference>
<dbReference type="Pfam" id="PF21981">
    <property type="entry name" value="RecX_HTH3"/>
    <property type="match status" value="1"/>
</dbReference>
<protein>
    <recommendedName>
        <fullName evidence="1">Regulatory protein RecX</fullName>
    </recommendedName>
</protein>
<reference key="1">
    <citation type="book" date="2006" name="Gram positive pathogens, 2nd edition">
        <title>The Staphylococcus aureus NCTC 8325 genome.</title>
        <editorList>
            <person name="Fischetti V."/>
            <person name="Novick R."/>
            <person name="Ferretti J."/>
            <person name="Portnoy D."/>
            <person name="Rood J."/>
        </editorList>
        <authorList>
            <person name="Gillaspy A.F."/>
            <person name="Worrell V."/>
            <person name="Orvis J."/>
            <person name="Roe B.A."/>
            <person name="Dyer D.W."/>
            <person name="Iandolo J.J."/>
        </authorList>
    </citation>
    <scope>NUCLEOTIDE SEQUENCE [LARGE SCALE GENOMIC DNA]</scope>
    <source>
        <strain>NCTC 8325 / PS 47</strain>
    </source>
</reference>
<accession>Q2G2G9</accession>
<comment type="function">
    <text evidence="1">Modulates RecA activity.</text>
</comment>
<comment type="subcellular location">
    <subcellularLocation>
        <location evidence="1">Cytoplasm</location>
    </subcellularLocation>
</comment>
<comment type="similarity">
    <text evidence="1">Belongs to the RecX family.</text>
</comment>
<gene>
    <name evidence="1" type="primary">recX</name>
    <name type="ordered locus">SAOUHSC_02011</name>
</gene>
<feature type="chain" id="PRO_1000065209" description="Regulatory protein RecX">
    <location>
        <begin position="1"/>
        <end position="272"/>
    </location>
</feature>
<evidence type="ECO:0000255" key="1">
    <source>
        <dbReference type="HAMAP-Rule" id="MF_01114"/>
    </source>
</evidence>
<organism>
    <name type="scientific">Staphylococcus aureus (strain NCTC 8325 / PS 47)</name>
    <dbReference type="NCBI Taxonomy" id="93061"/>
    <lineage>
        <taxon>Bacteria</taxon>
        <taxon>Bacillati</taxon>
        <taxon>Bacillota</taxon>
        <taxon>Bacilli</taxon>
        <taxon>Bacillales</taxon>
        <taxon>Staphylococcaceae</taxon>
        <taxon>Staphylococcus</taxon>
    </lineage>
</organism>